<dbReference type="EMBL" id="AF228474">
    <property type="protein sequence ID" value="AAF33851.1"/>
    <property type="molecule type" value="mRNA"/>
</dbReference>
<dbReference type="EMBL" id="AM050231">
    <property type="protein sequence ID" value="CAJ18903.1"/>
    <property type="molecule type" value="Genomic_DNA"/>
</dbReference>
<dbReference type="EMBL" id="AM050232">
    <property type="protein sequence ID" value="CAJ18904.1"/>
    <property type="molecule type" value="Genomic_DNA"/>
</dbReference>
<dbReference type="EMBL" id="AM050233">
    <property type="protein sequence ID" value="CAJ18905.1"/>
    <property type="molecule type" value="Genomic_DNA"/>
</dbReference>
<dbReference type="EMBL" id="AM050234">
    <property type="protein sequence ID" value="CAJ18906.1"/>
    <property type="molecule type" value="Genomic_DNA"/>
</dbReference>
<dbReference type="EMBL" id="AM050235">
    <property type="protein sequence ID" value="CAJ18907.1"/>
    <property type="molecule type" value="Genomic_DNA"/>
</dbReference>
<dbReference type="EMBL" id="AM050236">
    <property type="protein sequence ID" value="CAJ18908.1"/>
    <property type="molecule type" value="Genomic_DNA"/>
</dbReference>
<dbReference type="EMBL" id="AM050237">
    <property type="protein sequence ID" value="CAJ18909.1"/>
    <property type="molecule type" value="Genomic_DNA"/>
</dbReference>
<dbReference type="EMBL" id="AM050238">
    <property type="protein sequence ID" value="CAJ18910.1"/>
    <property type="molecule type" value="Genomic_DNA"/>
</dbReference>
<dbReference type="EMBL" id="AM050239">
    <property type="protein sequence ID" value="CAJ18911.1"/>
    <property type="molecule type" value="Genomic_DNA"/>
</dbReference>
<dbReference type="EMBL" id="AM050240">
    <property type="protein sequence ID" value="CAJ18912.1"/>
    <property type="molecule type" value="Genomic_DNA"/>
</dbReference>
<dbReference type="EMBL" id="AM050241">
    <property type="protein sequence ID" value="CAJ18913.1"/>
    <property type="molecule type" value="Genomic_DNA"/>
</dbReference>
<dbReference type="EMBL" id="AM050242">
    <property type="protein sequence ID" value="CAJ18914.1"/>
    <property type="molecule type" value="Genomic_DNA"/>
</dbReference>
<dbReference type="EMBL" id="AE014296">
    <property type="protein sequence ID" value="AAF50349.1"/>
    <property type="molecule type" value="Genomic_DNA"/>
</dbReference>
<dbReference type="RefSeq" id="NP_523986.2">
    <property type="nucleotide sequence ID" value="NM_079262.3"/>
</dbReference>
<dbReference type="PDB" id="3IE4">
    <property type="method" value="X-ray"/>
    <property type="resolution" value="1.45 A"/>
    <property type="chains" value="A/B=26-132"/>
</dbReference>
<dbReference type="PDBsum" id="3IE4"/>
<dbReference type="SMR" id="Q9NHA8"/>
<dbReference type="BioGRID" id="64425">
    <property type="interactions" value="3"/>
</dbReference>
<dbReference type="FunCoup" id="Q9NHA8">
    <property type="interactions" value="92"/>
</dbReference>
<dbReference type="IntAct" id="Q9NHA8">
    <property type="interactions" value="1"/>
</dbReference>
<dbReference type="STRING" id="7227.FBpp0076237"/>
<dbReference type="CAZy" id="CBM39">
    <property type="family name" value="Carbohydrate-Binding Module Family 39"/>
</dbReference>
<dbReference type="CAZy" id="GH16">
    <property type="family name" value="Glycoside Hydrolase Family 16"/>
</dbReference>
<dbReference type="GlyCosmos" id="Q9NHA8">
    <property type="glycosylation" value="2 sites, No reported glycans"/>
</dbReference>
<dbReference type="GlyGen" id="Q9NHA8">
    <property type="glycosylation" value="2 sites"/>
</dbReference>
<dbReference type="PaxDb" id="7227-FBpp0076237"/>
<dbReference type="EnsemblMetazoa" id="FBtr0076510">
    <property type="protein sequence ID" value="FBpp0076237"/>
    <property type="gene ID" value="FBgn0040321"/>
</dbReference>
<dbReference type="GeneID" id="39020"/>
<dbReference type="KEGG" id="dme:Dmel_CG5008"/>
<dbReference type="AGR" id="FB:FBgn0040321"/>
<dbReference type="CTD" id="39020"/>
<dbReference type="FlyBase" id="FBgn0040321">
    <property type="gene designation" value="GNBP3"/>
</dbReference>
<dbReference type="VEuPathDB" id="VectorBase:FBgn0040321"/>
<dbReference type="eggNOG" id="ENOG502RVCU">
    <property type="taxonomic scope" value="Eukaryota"/>
</dbReference>
<dbReference type="GeneTree" id="ENSGT00940000165988"/>
<dbReference type="HOGENOM" id="CLU_019533_2_0_1"/>
<dbReference type="InParanoid" id="Q9NHA8"/>
<dbReference type="OMA" id="WSDSFHN"/>
<dbReference type="OrthoDB" id="4781at2759"/>
<dbReference type="PhylomeDB" id="Q9NHA8"/>
<dbReference type="SignaLink" id="Q9NHA8"/>
<dbReference type="BioGRID-ORCS" id="39020">
    <property type="hits" value="0 hits in 1 CRISPR screen"/>
</dbReference>
<dbReference type="EvolutionaryTrace" id="Q9NHA8"/>
<dbReference type="GenomeRNAi" id="39020"/>
<dbReference type="PRO" id="PR:Q9NHA8"/>
<dbReference type="Proteomes" id="UP000000803">
    <property type="component" value="Chromosome 3L"/>
</dbReference>
<dbReference type="Bgee" id="FBgn0040321">
    <property type="expression patterns" value="Expressed in eye disc (Drosophila) and 56 other cell types or tissues"/>
</dbReference>
<dbReference type="ExpressionAtlas" id="Q9NHA8">
    <property type="expression patterns" value="baseline and differential"/>
</dbReference>
<dbReference type="GO" id="GO:0009986">
    <property type="term" value="C:cell surface"/>
    <property type="evidence" value="ECO:0000314"/>
    <property type="project" value="FlyBase"/>
</dbReference>
<dbReference type="GO" id="GO:0005576">
    <property type="term" value="C:extracellular region"/>
    <property type="evidence" value="ECO:0000250"/>
    <property type="project" value="UniProtKB"/>
</dbReference>
<dbReference type="GO" id="GO:0005615">
    <property type="term" value="C:extracellular space"/>
    <property type="evidence" value="ECO:0000314"/>
    <property type="project" value="FlyBase"/>
</dbReference>
<dbReference type="GO" id="GO:0001872">
    <property type="term" value="F:(1-&gt;3)-beta-D-glucan binding"/>
    <property type="evidence" value="ECO:0000314"/>
    <property type="project" value="FlyBase"/>
</dbReference>
<dbReference type="GO" id="GO:0001874">
    <property type="term" value="F:(1-&gt;3)-beta-D-glucan immune receptor activity"/>
    <property type="evidence" value="ECO:0000314"/>
    <property type="project" value="FlyBase"/>
</dbReference>
<dbReference type="GO" id="GO:0001530">
    <property type="term" value="F:lipopolysaccharide binding"/>
    <property type="evidence" value="ECO:0000314"/>
    <property type="project" value="FlyBase"/>
</dbReference>
<dbReference type="GO" id="GO:0038187">
    <property type="term" value="F:pattern recognition receptor activity"/>
    <property type="evidence" value="ECO:0000250"/>
    <property type="project" value="FlyBase"/>
</dbReference>
<dbReference type="GO" id="GO:0019732">
    <property type="term" value="P:antifungal humoral response"/>
    <property type="evidence" value="ECO:0000315"/>
    <property type="project" value="FlyBase"/>
</dbReference>
<dbReference type="GO" id="GO:0061760">
    <property type="term" value="P:antifungal innate immune response"/>
    <property type="evidence" value="ECO:0000315"/>
    <property type="project" value="FlyBase"/>
</dbReference>
<dbReference type="GO" id="GO:0005975">
    <property type="term" value="P:carbohydrate metabolic process"/>
    <property type="evidence" value="ECO:0007669"/>
    <property type="project" value="InterPro"/>
</dbReference>
<dbReference type="GO" id="GO:0032491">
    <property type="term" value="P:detection of molecule of fungal origin"/>
    <property type="evidence" value="ECO:0000314"/>
    <property type="project" value="FlyBase"/>
</dbReference>
<dbReference type="GO" id="GO:0002758">
    <property type="term" value="P:innate immune response-activating signaling pathway"/>
    <property type="evidence" value="ECO:0000250"/>
    <property type="project" value="FlyBase"/>
</dbReference>
<dbReference type="GO" id="GO:0002221">
    <property type="term" value="P:pattern recognition receptor signaling pathway"/>
    <property type="evidence" value="ECO:0000250"/>
    <property type="project" value="UniProtKB"/>
</dbReference>
<dbReference type="GO" id="GO:0035008">
    <property type="term" value="P:positive regulation of melanization defense response"/>
    <property type="evidence" value="ECO:0000315"/>
    <property type="project" value="FlyBase"/>
</dbReference>
<dbReference type="GO" id="GO:0045088">
    <property type="term" value="P:regulation of innate immune response"/>
    <property type="evidence" value="ECO:0000250"/>
    <property type="project" value="UniProtKB"/>
</dbReference>
<dbReference type="GO" id="GO:0160032">
    <property type="term" value="P:Toll receptor ligand protein activation cascade"/>
    <property type="evidence" value="ECO:0000315"/>
    <property type="project" value="FlyBase"/>
</dbReference>
<dbReference type="CDD" id="cd02179">
    <property type="entry name" value="GH16_beta_GRP"/>
    <property type="match status" value="1"/>
</dbReference>
<dbReference type="FunFam" id="2.60.40.2140:FF:000001">
    <property type="entry name" value="Beta-1,3-glucan-binding protein"/>
    <property type="match status" value="1"/>
</dbReference>
<dbReference type="FunFam" id="2.60.120.200:FF:000383">
    <property type="entry name" value="GM25102"/>
    <property type="match status" value="1"/>
</dbReference>
<dbReference type="Gene3D" id="2.60.120.200">
    <property type="match status" value="1"/>
</dbReference>
<dbReference type="Gene3D" id="2.60.40.2140">
    <property type="entry name" value="Beta-1,3-glucan-recognition protein, N-terminal domain"/>
    <property type="match status" value="1"/>
</dbReference>
<dbReference type="InterPro" id="IPR031756">
    <property type="entry name" value="BGBP_N"/>
</dbReference>
<dbReference type="InterPro" id="IPR043030">
    <property type="entry name" value="BGBP_N_sf"/>
</dbReference>
<dbReference type="InterPro" id="IPR013320">
    <property type="entry name" value="ConA-like_dom_sf"/>
</dbReference>
<dbReference type="InterPro" id="IPR000757">
    <property type="entry name" value="GH16"/>
</dbReference>
<dbReference type="InterPro" id="IPR035806">
    <property type="entry name" value="GH16_GRP_C"/>
</dbReference>
<dbReference type="InterPro" id="IPR050546">
    <property type="entry name" value="Glycosyl_Hydrlase_16"/>
</dbReference>
<dbReference type="PANTHER" id="PTHR10963">
    <property type="entry name" value="GLYCOSYL HYDROLASE-RELATED"/>
    <property type="match status" value="1"/>
</dbReference>
<dbReference type="PANTHER" id="PTHR10963:SF60">
    <property type="entry name" value="GRAM-NEGATIVE BACTERIA-BINDING PROTEIN 1-RELATED"/>
    <property type="match status" value="1"/>
</dbReference>
<dbReference type="Pfam" id="PF15886">
    <property type="entry name" value="CBM39"/>
    <property type="match status" value="1"/>
</dbReference>
<dbReference type="Pfam" id="PF00722">
    <property type="entry name" value="Glyco_hydro_16"/>
    <property type="match status" value="1"/>
</dbReference>
<dbReference type="SUPFAM" id="SSF49899">
    <property type="entry name" value="Concanavalin A-like lectins/glucanases"/>
    <property type="match status" value="1"/>
</dbReference>
<dbReference type="PROSITE" id="PS51969">
    <property type="entry name" value="CBM39"/>
    <property type="match status" value="1"/>
</dbReference>
<dbReference type="PROSITE" id="PS51762">
    <property type="entry name" value="GH16_2"/>
    <property type="match status" value="1"/>
</dbReference>
<gene>
    <name evidence="11" type="primary">GNBP3</name>
    <name type="ORF">CG5008</name>
</gene>
<evidence type="ECO:0000250" key="1"/>
<evidence type="ECO:0000250" key="2">
    <source>
        <dbReference type="UniProtKB" id="Q8MU95"/>
    </source>
</evidence>
<evidence type="ECO:0000255" key="3"/>
<evidence type="ECO:0000255" key="4">
    <source>
        <dbReference type="PROSITE-ProRule" id="PRU01098"/>
    </source>
</evidence>
<evidence type="ECO:0000255" key="5">
    <source>
        <dbReference type="PROSITE-ProRule" id="PRU01314"/>
    </source>
</evidence>
<evidence type="ECO:0000269" key="6">
    <source>
    </source>
</evidence>
<evidence type="ECO:0000269" key="7">
    <source>
    </source>
</evidence>
<evidence type="ECO:0000305" key="8"/>
<evidence type="ECO:0000312" key="9">
    <source>
        <dbReference type="EMBL" id="AAF33851.1"/>
    </source>
</evidence>
<evidence type="ECO:0000312" key="10">
    <source>
        <dbReference type="EMBL" id="AAF50349.1"/>
    </source>
</evidence>
<evidence type="ECO:0000312" key="11">
    <source>
        <dbReference type="FlyBase" id="FBgn0040321"/>
    </source>
</evidence>
<evidence type="ECO:0007829" key="12">
    <source>
        <dbReference type="PDB" id="3IE4"/>
    </source>
</evidence>
<protein>
    <recommendedName>
        <fullName>Gram-negative bacteria-binding protein 3</fullName>
    </recommendedName>
</protein>
<accession>Q9NHA8</accession>
<accession>A0ZX55</accession>
<accession>A0ZX56</accession>
<accession>A0ZX59</accession>
<accession>A0ZX64</accession>
<accession>Q9VSR4</accession>
<proteinExistence type="evidence at protein level"/>
<comment type="function">
    <text evidence="1">Involved in the recognition of invading microorganisms. Binds specifically to beta-1,3-glucan and activates the phenoloxidase cascade (By similarity).</text>
</comment>
<comment type="subcellular location">
    <subcellularLocation>
        <location evidence="2">Secreted</location>
    </subcellularLocation>
</comment>
<comment type="developmental stage">
    <text evidence="7">Expressed at very low levels during embryonic development. Expression increases during the larva stages and peaks at a moderate level during the late larval, prepupal and pupal stages, before decreasing in the adult.</text>
</comment>
<comment type="similarity">
    <text evidence="8">Belongs to the insect beta-1,3-glucan binding protein family.</text>
</comment>
<keyword id="KW-0002">3D-structure</keyword>
<keyword id="KW-0325">Glycoprotein</keyword>
<keyword id="KW-0391">Immunity</keyword>
<keyword id="KW-0399">Innate immunity</keyword>
<keyword id="KW-1185">Reference proteome</keyword>
<keyword id="KW-0964">Secreted</keyword>
<keyword id="KW-0732">Signal</keyword>
<organism>
    <name type="scientific">Drosophila melanogaster</name>
    <name type="common">Fruit fly</name>
    <dbReference type="NCBI Taxonomy" id="7227"/>
    <lineage>
        <taxon>Eukaryota</taxon>
        <taxon>Metazoa</taxon>
        <taxon>Ecdysozoa</taxon>
        <taxon>Arthropoda</taxon>
        <taxon>Hexapoda</taxon>
        <taxon>Insecta</taxon>
        <taxon>Pterygota</taxon>
        <taxon>Neoptera</taxon>
        <taxon>Endopterygota</taxon>
        <taxon>Diptera</taxon>
        <taxon>Brachycera</taxon>
        <taxon>Muscomorpha</taxon>
        <taxon>Ephydroidea</taxon>
        <taxon>Drosophilidae</taxon>
        <taxon>Drosophila</taxon>
        <taxon>Sophophora</taxon>
    </lineage>
</organism>
<name>BGBP3_DROME</name>
<sequence>MADALRFVAWSCCLQLLFLLLGVQGYEVPKAKIDVFYPKGFEVSIPDEEGITLFAFHGKLNEEMEGLEAGTWARDIVKAKNGRWTFRDRITALKPGDTLYYWTYVIYNGLGYREDDGSFVVNGYSGNNASPHPPVVPVSTTPWTPPADPDIDIRLGCTTPKTEVNGAPTRCAGQLVFVDEFNAAKLDPNKWKAERRFSGQPDYEFNVYVDDAPETLCLANGHVVLSTNTMKKQFKKGSGESLDLGEKCTGQANTHDCVRNGRTLNDGLPPMVTAQFSSKDFSFKYGRVEVRAKMPRAQWVTPQIWLQPRRPIYGVDDYRSGQLRIAYTRPNGGNLDLYGAAVLFADEPLRSVKNCLKPGTGNNSEDWSDSFHNYTLEWTPRELRWLVDGKEWCVQGSAKGSFSETTAAGKSLPQAQKLEEGTGLAPFDQEFYLTFGLSVGGFNEYQHEIKPWNERAPQAQKAFWKEVKKIRDHWLDEGHMKIDYVKVYSL</sequence>
<reference evidence="8 9" key="1">
    <citation type="journal article" date="2000" name="J. Biol. Chem.">
        <title>Gram-negative bacteria-binding protein, a pattern recognition receptor for lipopolysaccharide and beta-1,3-glucan that mediates the signaling for the induction of innate immune genes in Drosophila melanogaster cells.</title>
        <authorList>
            <person name="Kim Y.-S."/>
            <person name="Ryu J.-H."/>
            <person name="Han S.-J."/>
            <person name="Choi K.-H."/>
            <person name="Nam K.-B."/>
            <person name="Jang I.-H."/>
            <person name="Lemaitre B."/>
            <person name="Brey P.T."/>
            <person name="Lee W.-J."/>
        </authorList>
    </citation>
    <scope>NUCLEOTIDE SEQUENCE [MRNA]</scope>
    <scope>DEVELOPMENTAL STAGE</scope>
</reference>
<reference key="2">
    <citation type="journal article" date="2006" name="J. Mol. Evol.">
        <title>Contrasting evolutionary patterns in Drosophila immune receptors.</title>
        <authorList>
            <person name="Jiggins F.M."/>
            <person name="Kim K.W."/>
        </authorList>
    </citation>
    <scope>NUCLEOTIDE SEQUENCE [GENOMIC DNA]</scope>
    <source>
        <strain>Netherlands line N01</strain>
        <strain>Netherlands line N02</strain>
        <strain>Netherlands line N03</strain>
        <strain>Netherlands line N06</strain>
        <strain>Netherlands line N07</strain>
        <strain>Netherlands line N14</strain>
        <strain>Netherlands line N15</strain>
        <strain>Netherlands line N16</strain>
        <strain>Netherlands line N17</strain>
        <strain>Netherlands line N22</strain>
        <strain>Netherlands line N29</strain>
        <strain>Netherlands line N30</strain>
    </source>
</reference>
<reference evidence="10" key="3">
    <citation type="journal article" date="2000" name="Science">
        <title>The genome sequence of Drosophila melanogaster.</title>
        <authorList>
            <person name="Adams M.D."/>
            <person name="Celniker S.E."/>
            <person name="Holt R.A."/>
            <person name="Evans C.A."/>
            <person name="Gocayne J.D."/>
            <person name="Amanatides P.G."/>
            <person name="Scherer S.E."/>
            <person name="Li P.W."/>
            <person name="Hoskins R.A."/>
            <person name="Galle R.F."/>
            <person name="George R.A."/>
            <person name="Lewis S.E."/>
            <person name="Richards S."/>
            <person name="Ashburner M."/>
            <person name="Henderson S.N."/>
            <person name="Sutton G.G."/>
            <person name="Wortman J.R."/>
            <person name="Yandell M.D."/>
            <person name="Zhang Q."/>
            <person name="Chen L.X."/>
            <person name="Brandon R.C."/>
            <person name="Rogers Y.-H.C."/>
            <person name="Blazej R.G."/>
            <person name="Champe M."/>
            <person name="Pfeiffer B.D."/>
            <person name="Wan K.H."/>
            <person name="Doyle C."/>
            <person name="Baxter E.G."/>
            <person name="Helt G."/>
            <person name="Nelson C.R."/>
            <person name="Miklos G.L.G."/>
            <person name="Abril J.F."/>
            <person name="Agbayani A."/>
            <person name="An H.-J."/>
            <person name="Andrews-Pfannkoch C."/>
            <person name="Baldwin D."/>
            <person name="Ballew R.M."/>
            <person name="Basu A."/>
            <person name="Baxendale J."/>
            <person name="Bayraktaroglu L."/>
            <person name="Beasley E.M."/>
            <person name="Beeson K.Y."/>
            <person name="Benos P.V."/>
            <person name="Berman B.P."/>
            <person name="Bhandari D."/>
            <person name="Bolshakov S."/>
            <person name="Borkova D."/>
            <person name="Botchan M.R."/>
            <person name="Bouck J."/>
            <person name="Brokstein P."/>
            <person name="Brottier P."/>
            <person name="Burtis K.C."/>
            <person name="Busam D.A."/>
            <person name="Butler H."/>
            <person name="Cadieu E."/>
            <person name="Center A."/>
            <person name="Chandra I."/>
            <person name="Cherry J.M."/>
            <person name="Cawley S."/>
            <person name="Dahlke C."/>
            <person name="Davenport L.B."/>
            <person name="Davies P."/>
            <person name="de Pablos B."/>
            <person name="Delcher A."/>
            <person name="Deng Z."/>
            <person name="Mays A.D."/>
            <person name="Dew I."/>
            <person name="Dietz S.M."/>
            <person name="Dodson K."/>
            <person name="Doup L.E."/>
            <person name="Downes M."/>
            <person name="Dugan-Rocha S."/>
            <person name="Dunkov B.C."/>
            <person name="Dunn P."/>
            <person name="Durbin K.J."/>
            <person name="Evangelista C.C."/>
            <person name="Ferraz C."/>
            <person name="Ferriera S."/>
            <person name="Fleischmann W."/>
            <person name="Fosler C."/>
            <person name="Gabrielian A.E."/>
            <person name="Garg N.S."/>
            <person name="Gelbart W.M."/>
            <person name="Glasser K."/>
            <person name="Glodek A."/>
            <person name="Gong F."/>
            <person name="Gorrell J.H."/>
            <person name="Gu Z."/>
            <person name="Guan P."/>
            <person name="Harris M."/>
            <person name="Harris N.L."/>
            <person name="Harvey D.A."/>
            <person name="Heiman T.J."/>
            <person name="Hernandez J.R."/>
            <person name="Houck J."/>
            <person name="Hostin D."/>
            <person name="Houston K.A."/>
            <person name="Howland T.J."/>
            <person name="Wei M.-H."/>
            <person name="Ibegwam C."/>
            <person name="Jalali M."/>
            <person name="Kalush F."/>
            <person name="Karpen G.H."/>
            <person name="Ke Z."/>
            <person name="Kennison J.A."/>
            <person name="Ketchum K.A."/>
            <person name="Kimmel B.E."/>
            <person name="Kodira C.D."/>
            <person name="Kraft C.L."/>
            <person name="Kravitz S."/>
            <person name="Kulp D."/>
            <person name="Lai Z."/>
            <person name="Lasko P."/>
            <person name="Lei Y."/>
            <person name="Levitsky A.A."/>
            <person name="Li J.H."/>
            <person name="Li Z."/>
            <person name="Liang Y."/>
            <person name="Lin X."/>
            <person name="Liu X."/>
            <person name="Mattei B."/>
            <person name="McIntosh T.C."/>
            <person name="McLeod M.P."/>
            <person name="McPherson D."/>
            <person name="Merkulov G."/>
            <person name="Milshina N.V."/>
            <person name="Mobarry C."/>
            <person name="Morris J."/>
            <person name="Moshrefi A."/>
            <person name="Mount S.M."/>
            <person name="Moy M."/>
            <person name="Murphy B."/>
            <person name="Murphy L."/>
            <person name="Muzny D.M."/>
            <person name="Nelson D.L."/>
            <person name="Nelson D.R."/>
            <person name="Nelson K.A."/>
            <person name="Nixon K."/>
            <person name="Nusskern D.R."/>
            <person name="Pacleb J.M."/>
            <person name="Palazzolo M."/>
            <person name="Pittman G.S."/>
            <person name="Pan S."/>
            <person name="Pollard J."/>
            <person name="Puri V."/>
            <person name="Reese M.G."/>
            <person name="Reinert K."/>
            <person name="Remington K."/>
            <person name="Saunders R.D.C."/>
            <person name="Scheeler F."/>
            <person name="Shen H."/>
            <person name="Shue B.C."/>
            <person name="Siden-Kiamos I."/>
            <person name="Simpson M."/>
            <person name="Skupski M.P."/>
            <person name="Smith T.J."/>
            <person name="Spier E."/>
            <person name="Spradling A.C."/>
            <person name="Stapleton M."/>
            <person name="Strong R."/>
            <person name="Sun E."/>
            <person name="Svirskas R."/>
            <person name="Tector C."/>
            <person name="Turner R."/>
            <person name="Venter E."/>
            <person name="Wang A.H."/>
            <person name="Wang X."/>
            <person name="Wang Z.-Y."/>
            <person name="Wassarman D.A."/>
            <person name="Weinstock G.M."/>
            <person name="Weissenbach J."/>
            <person name="Williams S.M."/>
            <person name="Woodage T."/>
            <person name="Worley K.C."/>
            <person name="Wu D."/>
            <person name="Yang S."/>
            <person name="Yao Q.A."/>
            <person name="Ye J."/>
            <person name="Yeh R.-F."/>
            <person name="Zaveri J.S."/>
            <person name="Zhan M."/>
            <person name="Zhang G."/>
            <person name="Zhao Q."/>
            <person name="Zheng L."/>
            <person name="Zheng X.H."/>
            <person name="Zhong F.N."/>
            <person name="Zhong W."/>
            <person name="Zhou X."/>
            <person name="Zhu S.C."/>
            <person name="Zhu X."/>
            <person name="Smith H.O."/>
            <person name="Gibbs R.A."/>
            <person name="Myers E.W."/>
            <person name="Rubin G.M."/>
            <person name="Venter J.C."/>
        </authorList>
    </citation>
    <scope>NUCLEOTIDE SEQUENCE [LARGE SCALE GENOMIC DNA]</scope>
    <source>
        <strain evidence="6">Berkeley</strain>
    </source>
</reference>
<reference key="4">
    <citation type="journal article" date="2002" name="Genome Biol.">
        <title>Annotation of the Drosophila melanogaster euchromatic genome: a systematic review.</title>
        <authorList>
            <person name="Misra S."/>
            <person name="Crosby M.A."/>
            <person name="Mungall C.J."/>
            <person name="Matthews B.B."/>
            <person name="Campbell K.S."/>
            <person name="Hradecky P."/>
            <person name="Huang Y."/>
            <person name="Kaminker J.S."/>
            <person name="Millburn G.H."/>
            <person name="Prochnik S.E."/>
            <person name="Smith C.D."/>
            <person name="Tupy J.L."/>
            <person name="Whitfield E.J."/>
            <person name="Bayraktaroglu L."/>
            <person name="Berman B.P."/>
            <person name="Bettencourt B.R."/>
            <person name="Celniker S.E."/>
            <person name="de Grey A.D.N.J."/>
            <person name="Drysdale R.A."/>
            <person name="Harris N.L."/>
            <person name="Richter J."/>
            <person name="Russo S."/>
            <person name="Schroeder A.J."/>
            <person name="Shu S.Q."/>
            <person name="Stapleton M."/>
            <person name="Yamada C."/>
            <person name="Ashburner M."/>
            <person name="Gelbart W.M."/>
            <person name="Rubin G.M."/>
            <person name="Lewis S.E."/>
        </authorList>
    </citation>
    <scope>GENOME REANNOTATION</scope>
    <source>
        <strain>Berkeley</strain>
    </source>
</reference>
<feature type="signal peptide" evidence="3">
    <location>
        <begin position="1"/>
        <end position="25"/>
    </location>
</feature>
<feature type="chain" id="PRO_0000002819" description="Gram-negative bacteria-binding protein 3">
    <location>
        <begin position="26"/>
        <end position="490"/>
    </location>
</feature>
<feature type="domain" description="CBM39" evidence="5">
    <location>
        <begin position="26"/>
        <end position="126"/>
    </location>
</feature>
<feature type="domain" description="GH16" evidence="4">
    <location>
        <begin position="162"/>
        <end position="490"/>
    </location>
</feature>
<feature type="glycosylation site" description="N-linked (GlcNAc...) asparagine" evidence="3">
    <location>
        <position position="362"/>
    </location>
</feature>
<feature type="glycosylation site" description="N-linked (GlcNAc...) asparagine" evidence="3">
    <location>
        <position position="373"/>
    </location>
</feature>
<feature type="sequence variant" description="In strain: Netherlands line N22.">
    <original>L</original>
    <variation>Q</variation>
    <location>
        <position position="16"/>
    </location>
</feature>
<feature type="sequence variant" description="In strain: Netherlands line N02 and Netherlands line N30.">
    <original>P</original>
    <variation>T</variation>
    <location>
        <position position="142"/>
    </location>
</feature>
<feature type="sequence variant" description="In strain: Netherlands line N02, Netherlands line N07, Netherlands line N17 and Netherlands line N30.">
    <original>P</original>
    <variation>L</variation>
    <location>
        <position position="213"/>
    </location>
</feature>
<feature type="sequence variant" description="In strain: Netherlands line N02 and Netherlands line N30.">
    <original>A</original>
    <variation>V</variation>
    <location>
        <position position="292"/>
    </location>
</feature>
<feature type="sequence variant" description="In strain: Netherlands line N22.">
    <original>K</original>
    <variation>I</variation>
    <location>
        <position position="399"/>
    </location>
</feature>
<feature type="sequence variant" description="In strain: Netherlands line N02 and Netherlands line N30.">
    <original>E</original>
    <variation>G</variation>
    <location>
        <position position="404"/>
    </location>
</feature>
<feature type="sequence variant" description="In strain: Netherlands line N22.">
    <original>A</original>
    <variation>G</variation>
    <location>
        <position position="408"/>
    </location>
</feature>
<feature type="sequence variant" description="In strain: Netherlands line N22.">
    <original>H</original>
    <variation>N</variation>
    <location>
        <position position="479"/>
    </location>
</feature>
<feature type="sequence conflict" description="In Ref. 1; AAF33851." evidence="8" ref="1">
    <original>R</original>
    <variation>K</variation>
    <location>
        <position position="196"/>
    </location>
</feature>
<feature type="strand" evidence="12">
    <location>
        <begin position="32"/>
        <end position="39"/>
    </location>
</feature>
<feature type="strand" evidence="12">
    <location>
        <begin position="41"/>
        <end position="46"/>
    </location>
</feature>
<feature type="strand" evidence="12">
    <location>
        <begin position="51"/>
        <end position="62"/>
    </location>
</feature>
<feature type="strand" evidence="12">
    <location>
        <begin position="71"/>
        <end position="76"/>
    </location>
</feature>
<feature type="strand" evidence="12">
    <location>
        <begin position="83"/>
        <end position="90"/>
    </location>
</feature>
<feature type="strand" evidence="12">
    <location>
        <begin position="98"/>
        <end position="107"/>
    </location>
</feature>
<feature type="strand" evidence="12">
    <location>
        <begin position="110"/>
        <end position="120"/>
    </location>
</feature>